<evidence type="ECO:0000250" key="1">
    <source>
        <dbReference type="UniProtKB" id="P50982"/>
    </source>
</evidence>
<evidence type="ECO:0000255" key="2"/>
<evidence type="ECO:0000269" key="3">
    <source>
    </source>
</evidence>
<evidence type="ECO:0000303" key="4">
    <source>
    </source>
</evidence>
<evidence type="ECO:0000305" key="5"/>
<evidence type="ECO:0000305" key="6">
    <source>
    </source>
</evidence>
<feature type="signal peptide" evidence="2">
    <location>
        <begin position="1"/>
        <end position="21"/>
    </location>
</feature>
<feature type="propeptide" id="PRO_0000451772">
    <location>
        <begin position="22"/>
        <end position="51"/>
    </location>
</feature>
<feature type="peptide" id="PRO_0000439887" description="Alpha-conotoxin EIIB" evidence="3">
    <location>
        <begin position="52"/>
        <end position="67"/>
    </location>
</feature>
<feature type="modified residue" description="Pyrrolidone carboxylic acid" evidence="3">
    <location>
        <position position="52"/>
    </location>
</feature>
<feature type="modified residue" description="Hydroxyproline" evidence="3">
    <location>
        <position position="54"/>
    </location>
</feature>
<feature type="modified residue" description="Cysteine amide" evidence="3">
    <location>
        <position position="67"/>
    </location>
</feature>
<feature type="disulfide bond" evidence="1">
    <location>
        <begin position="56"/>
        <end position="62"/>
    </location>
</feature>
<feature type="disulfide bond" evidence="1">
    <location>
        <begin position="57"/>
        <end position="67"/>
    </location>
</feature>
<organism>
    <name type="scientific">Conus ermineus</name>
    <name type="common">Agate cone</name>
    <name type="synonym">Chelyconus ermineus</name>
    <dbReference type="NCBI Taxonomy" id="55423"/>
    <lineage>
        <taxon>Eukaryota</taxon>
        <taxon>Metazoa</taxon>
        <taxon>Spiralia</taxon>
        <taxon>Lophotrochozoa</taxon>
        <taxon>Mollusca</taxon>
        <taxon>Gastropoda</taxon>
        <taxon>Caenogastropoda</taxon>
        <taxon>Neogastropoda</taxon>
        <taxon>Conoidea</taxon>
        <taxon>Conidae</taxon>
        <taxon>Conus</taxon>
        <taxon>Chelyconus</taxon>
    </lineage>
</organism>
<name>CA2B_CONER</name>
<protein>
    <recommendedName>
        <fullName evidence="4">Alpha-conotoxin EIIB</fullName>
    </recommendedName>
    <alternativeName>
        <fullName evidence="5">E1.2</fullName>
    </alternativeName>
</protein>
<accession>C0HKF6</accession>
<accession>A0A346CIS6</accession>
<dbReference type="EMBL" id="MH360426">
    <property type="protein sequence ID" value="AXL95475.1"/>
    <property type="molecule type" value="mRNA"/>
</dbReference>
<dbReference type="GO" id="GO:0005576">
    <property type="term" value="C:extracellular region"/>
    <property type="evidence" value="ECO:0007669"/>
    <property type="project" value="UniProtKB-SubCell"/>
</dbReference>
<dbReference type="GO" id="GO:0035792">
    <property type="term" value="C:host cell postsynaptic membrane"/>
    <property type="evidence" value="ECO:0007669"/>
    <property type="project" value="UniProtKB-KW"/>
</dbReference>
<dbReference type="GO" id="GO:0030550">
    <property type="term" value="F:acetylcholine receptor inhibitor activity"/>
    <property type="evidence" value="ECO:0007669"/>
    <property type="project" value="UniProtKB-KW"/>
</dbReference>
<dbReference type="GO" id="GO:0090729">
    <property type="term" value="F:toxin activity"/>
    <property type="evidence" value="ECO:0007669"/>
    <property type="project" value="UniProtKB-KW"/>
</dbReference>
<dbReference type="InterPro" id="IPR009958">
    <property type="entry name" value="Conotoxin_a-typ"/>
</dbReference>
<dbReference type="Pfam" id="PF07365">
    <property type="entry name" value="Toxin_8"/>
    <property type="match status" value="1"/>
</dbReference>
<comment type="function">
    <text evidence="3">Alpha-conotoxins bind to the nicotinic acetylcholine receptors (nAChR) and inhibit them. This peptide potently blocks muscular nicotinic acetylcholine receptor (CHRNA1-CHRNB1-CHRNG-CHRND), and has no effect on neuronal receptors. It is able to totally displace [125I]-Bgtx from the Torpedo receptor with an inhibition constant (Ki) of 2.2 and 0.7 nM.</text>
</comment>
<comment type="subcellular location">
    <subcellularLocation>
        <location evidence="3">Secreted</location>
    </subcellularLocation>
</comment>
<comment type="tissue specificity">
    <text evidence="6">Expressed by the venom duct.</text>
</comment>
<comment type="domain">
    <text evidence="5">The cysteine framework is I (CC-C-C).</text>
</comment>
<comment type="mass spectrometry"/>
<comment type="similarity">
    <text evidence="5">Belongs to the conotoxin A superfamily.</text>
</comment>
<keyword id="KW-0008">Acetylcholine receptor inhibiting toxin</keyword>
<keyword id="KW-0027">Amidation</keyword>
<keyword id="KW-0165">Cleavage on pair of basic residues</keyword>
<keyword id="KW-0903">Direct protein sequencing</keyword>
<keyword id="KW-1015">Disulfide bond</keyword>
<keyword id="KW-0379">Hydroxylation</keyword>
<keyword id="KW-0528">Neurotoxin</keyword>
<keyword id="KW-0629">Postsynaptic neurotoxin</keyword>
<keyword id="KW-0873">Pyrrolidone carboxylic acid</keyword>
<keyword id="KW-0964">Secreted</keyword>
<keyword id="KW-0732">Signal</keyword>
<keyword id="KW-0800">Toxin</keyword>
<reference key="1">
    <citation type="journal article" date="2018" name="Genome Biol. Evol.">
        <title>Conotoxin diversity in Chelyconus ermineus (Born, 1778) and the convergent origin of piscivory in the Atlantic and Indo-Pacific cones.</title>
        <authorList>
            <person name="Abalde S."/>
            <person name="Tenorio M.J."/>
            <person name="Afonso C.M."/>
            <person name="Zardoya R."/>
        </authorList>
    </citation>
    <scope>NUCLEOTIDE SEQUENCE [MRNA]</scope>
</reference>
<reference evidence="5" key="2">
    <citation type="journal article" date="2017" name="Toxicon">
        <title>Discovery and characterization of EIIB, a new alpha-conotoxin from Conus ermineus venom by nAChRs affinity capture monitored by MALDI-TOF/TOF mass spectrometry.</title>
        <authorList>
            <person name="Echterbille J."/>
            <person name="Gilles N."/>
            <person name="Araoz R."/>
            <person name="Mourier G."/>
            <person name="Amar M."/>
            <person name="Servent D."/>
            <person name="De Pauw E."/>
            <person name="Quinton L."/>
        </authorList>
    </citation>
    <scope>PROTEIN SEQUENCE OF 52-67</scope>
    <scope>FUNCTION</scope>
    <scope>SUBCELLULAR LOCATION</scope>
    <scope>IDENTIFICATION BY MASS SPECTROMETRY</scope>
    <scope>PYROGLUTAMATE FORMATION AT GLN-52</scope>
    <scope>HYDROXYLATION AT PRO-54</scope>
    <scope>AMIDATION AT CYS-67</scope>
    <source>
        <tissue evidence="4">Venom</tissue>
    </source>
</reference>
<sequence>MGMRMMFIVFLLVVLATTVVSFTLDHVLGLASEGRNAKAIDNALDQRDPKRQTPGCCWHPACGKNRCGRR</sequence>
<proteinExistence type="evidence at protein level"/>